<proteinExistence type="inferred from homology"/>
<organismHost>
    <name type="scientific">Homo sapiens</name>
    <name type="common">Human</name>
    <dbReference type="NCBI Taxonomy" id="9606"/>
</organismHost>
<protein>
    <recommendedName>
        <fullName>Protein Rex</fullName>
    </recommendedName>
    <alternativeName>
        <fullName>Rev homolog</fullName>
    </alternativeName>
    <alternativeName>
        <fullName>Rex-3</fullName>
    </alternativeName>
</protein>
<reference key="1">
    <citation type="journal article" date="2006" name="J. Virol.">
        <title>Human T-cell lymphotropic virus type 3: complete nucleotide sequence and characterization of the human tax3 protein.</title>
        <authorList>
            <person name="Calattini S."/>
            <person name="Chevalier S.A."/>
            <person name="Duprez R."/>
            <person name="Afonso P."/>
            <person name="Froment A."/>
            <person name="Gessain A."/>
            <person name="Mahieux R."/>
        </authorList>
    </citation>
    <scope>NUCLEOTIDE SEQUENCE [GENOMIC DNA]</scope>
</reference>
<feature type="chain" id="PRO_0000260487" description="Protein Rex">
    <location>
        <begin position="1"/>
        <end position="182"/>
    </location>
</feature>
<feature type="region of interest" description="Disordered" evidence="2">
    <location>
        <begin position="1"/>
        <end position="26"/>
    </location>
</feature>
<feature type="region of interest" description="Homomultimerization" evidence="1">
    <location>
        <begin position="57"/>
        <end position="71"/>
    </location>
</feature>
<feature type="region of interest" description="Disordered" evidence="2">
    <location>
        <begin position="90"/>
        <end position="182"/>
    </location>
</feature>
<feature type="region of interest" description="Homomultimerization" evidence="1">
    <location>
        <begin position="124"/>
        <end position="132"/>
    </location>
</feature>
<feature type="short sequence motif" description="Nuclear localization signal, and RNA-binding (RxRE)" evidence="1">
    <location>
        <begin position="2"/>
        <end position="19"/>
    </location>
</feature>
<feature type="short sequence motif" description="Nuclear export signal" evidence="1">
    <location>
        <begin position="83"/>
        <end position="94"/>
    </location>
</feature>
<feature type="compositionally biased region" description="Basic residues" evidence="2">
    <location>
        <begin position="1"/>
        <end position="14"/>
    </location>
</feature>
<feature type="compositionally biased region" description="Pro residues" evidence="2">
    <location>
        <begin position="96"/>
        <end position="117"/>
    </location>
</feature>
<feature type="compositionally biased region" description="Polar residues" evidence="2">
    <location>
        <begin position="127"/>
        <end position="150"/>
    </location>
</feature>
<feature type="compositionally biased region" description="Polar residues" evidence="2">
    <location>
        <begin position="172"/>
        <end position="182"/>
    </location>
</feature>
<organism>
    <name type="scientific">Human T-cell leukemia virus 3 (strain Pyl43)</name>
    <name type="common">HTLV-3</name>
    <dbReference type="NCBI Taxonomy" id="406769"/>
    <lineage>
        <taxon>Viruses</taxon>
        <taxon>Riboviria</taxon>
        <taxon>Pararnavirae</taxon>
        <taxon>Artverviricota</taxon>
        <taxon>Revtraviricetes</taxon>
        <taxon>Ortervirales</taxon>
        <taxon>Retroviridae</taxon>
        <taxon>Orthoretrovirinae</taxon>
        <taxon>Deltaretrovirus</taxon>
        <taxon>Primate T-lymphotropic virus 3</taxon>
    </lineage>
</organism>
<evidence type="ECO:0000250" key="1"/>
<evidence type="ECO:0000256" key="2">
    <source>
        <dbReference type="SAM" id="MobiDB-lite"/>
    </source>
</evidence>
<evidence type="ECO:0000305" key="3"/>
<accession>Q09SZ8</accession>
<dbReference type="EMBL" id="DQ462191">
    <property type="protein sequence ID" value="ABF18962.1"/>
    <property type="molecule type" value="Genomic_DNA"/>
</dbReference>
<dbReference type="Proteomes" id="UP000007684">
    <property type="component" value="Genome"/>
</dbReference>
<dbReference type="GO" id="GO:0030430">
    <property type="term" value="C:host cell cytoplasm"/>
    <property type="evidence" value="ECO:0007669"/>
    <property type="project" value="UniProtKB-SubCell"/>
</dbReference>
<dbReference type="GO" id="GO:0044196">
    <property type="term" value="C:host cell nucleolus"/>
    <property type="evidence" value="ECO:0007669"/>
    <property type="project" value="UniProtKB-SubCell"/>
</dbReference>
<dbReference type="GO" id="GO:0003723">
    <property type="term" value="F:RNA binding"/>
    <property type="evidence" value="ECO:0007669"/>
    <property type="project" value="UniProtKB-KW"/>
</dbReference>
<dbReference type="GO" id="GO:0051028">
    <property type="term" value="P:mRNA transport"/>
    <property type="evidence" value="ECO:0007669"/>
    <property type="project" value="UniProtKB-KW"/>
</dbReference>
<sequence>MPKTRKQRSRRPRNQRPSTPWPISQVSDRAFSTGTLSTFSATVYRPIGAPFLGGFVPLGYTAMPCWPRAPNIRLPGTPSMDALSAQLYNTLSLGSPPSPPKELPAPSRFSPPQPLLRPPRFLHPSSTPLKNTPPSETIASSSPWESSCQPCPSPTLGSGPKTSTPYGAAPSCVSTSISSPPP</sequence>
<keyword id="KW-1035">Host cytoplasm</keyword>
<keyword id="KW-1048">Host nucleus</keyword>
<keyword id="KW-0509">mRNA transport</keyword>
<keyword id="KW-0694">RNA-binding</keyword>
<keyword id="KW-0813">Transport</keyword>
<comment type="function">
    <text evidence="1">Rex escorts unspliced gag-pro-pol and singly spliced env mRNAs out of the nucleus of infected cells. These mRNAs carry a recognition sequence called Rex responsive element (RxRE or XRE) located at the 3' region of the long terminal repeat (LTR). This function is essential since most HTLV proteins are translated from unspliced or partially spliced pre-mRNAs that cannot exit the nucleus by the pathway used by fully processed cellular mRNAs (By similarity).</text>
</comment>
<comment type="subunit">
    <text evidence="1">Homomultimer.</text>
</comment>
<comment type="subcellular location">
    <subcellularLocation>
        <location evidence="1">Host nucleus</location>
        <location evidence="1">Host nucleolus</location>
    </subcellularLocation>
    <subcellularLocation>
        <location evidence="1">Host cytoplasm</location>
    </subcellularLocation>
    <text evidence="1">The presence of both nuclear import (NLS) and nuclear export (NES) signals leads to continuous shuttling between the nucleus and cytoplasm.</text>
</comment>
<comment type="domain">
    <text evidence="1">The RNA-binding motif binds to the RxRE, a complex secondary structure consisting of four stem loops and a long stretch of stem structure, present in incompletely spliced viral pre-mRNAs. This region also contains the NLS which mediates nuclear localization. These overlapping functions prevent Rex bound to RxRE from undesirable return to the nucleus. When Rex binds the RxRE, the NLS becomes masked while the NES remains accessible (By similarity).</text>
</comment>
<comment type="similarity">
    <text evidence="3">Belongs to the deltaretrovirus Rex protein family.</text>
</comment>
<name>REX_HTL3P</name>
<gene>
    <name type="primary">rex</name>
</gene>